<organism>
    <name type="scientific">Pongo pygmaeus</name>
    <name type="common">Bornean orangutan</name>
    <dbReference type="NCBI Taxonomy" id="9600"/>
    <lineage>
        <taxon>Eukaryota</taxon>
        <taxon>Metazoa</taxon>
        <taxon>Chordata</taxon>
        <taxon>Craniata</taxon>
        <taxon>Vertebrata</taxon>
        <taxon>Euteleostomi</taxon>
        <taxon>Mammalia</taxon>
        <taxon>Eutheria</taxon>
        <taxon>Euarchontoglires</taxon>
        <taxon>Primates</taxon>
        <taxon>Haplorrhini</taxon>
        <taxon>Catarrhini</taxon>
        <taxon>Hominidae</taxon>
        <taxon>Pongo</taxon>
    </lineage>
</organism>
<keyword id="KW-0066">ATP synthesis</keyword>
<keyword id="KW-0138">CF(0)</keyword>
<keyword id="KW-0375">Hydrogen ion transport</keyword>
<keyword id="KW-0406">Ion transport</keyword>
<keyword id="KW-0472">Membrane</keyword>
<keyword id="KW-0496">Mitochondrion</keyword>
<keyword id="KW-0999">Mitochondrion inner membrane</keyword>
<keyword id="KW-0812">Transmembrane</keyword>
<keyword id="KW-1133">Transmembrane helix</keyword>
<keyword id="KW-0813">Transport</keyword>
<reference key="1">
    <citation type="journal article" date="1995" name="Proc. Natl. Acad. Sci. U.S.A.">
        <title>Recent African origin of modern humans revealed by complete sequences of hominoid mitochondrial DNAs.</title>
        <authorList>
            <person name="Horai S."/>
            <person name="Hayasaka K."/>
            <person name="Kondo R."/>
            <person name="Tsugane K."/>
            <person name="Takahata N."/>
        </authorList>
    </citation>
    <scope>NUCLEOTIDE SEQUENCE [GENOMIC DNA]</scope>
</reference>
<reference key="2">
    <citation type="journal article" date="1996" name="J. Mol. Evol.">
        <title>The mitochondrial DNA molecule of Sumatran orangutan and a molecular proposal for two (Bornean and Sumatran) species of orangutan.</title>
        <authorList>
            <person name="Xu X."/>
            <person name="Arnason U."/>
        </authorList>
    </citation>
    <scope>NUCLEOTIDE SEQUENCE [GENOMIC DNA]</scope>
    <scope>VARIANTS ASN-4 AND ALA-178</scope>
    <source>
        <strain>Isolate Anna</strain>
        <strain>Isolate Dennis</strain>
    </source>
</reference>
<accession>Q95A26</accession>
<accession>P92719</accession>
<accession>P92720</accession>
<dbReference type="EMBL" id="D38115">
    <property type="protein sequence ID" value="BAA85288.1"/>
    <property type="molecule type" value="Genomic_DNA"/>
</dbReference>
<dbReference type="EMBL" id="X97714">
    <property type="protein sequence ID" value="CAA66300.1"/>
    <property type="molecule type" value="Genomic_DNA"/>
</dbReference>
<dbReference type="EMBL" id="X97710">
    <property type="protein sequence ID" value="CAA66296.1"/>
    <property type="molecule type" value="Genomic_DNA"/>
</dbReference>
<dbReference type="RefSeq" id="NP_008230.1">
    <property type="nucleotide sequence ID" value="NC_001646.1"/>
</dbReference>
<dbReference type="SMR" id="Q95A26"/>
<dbReference type="GeneID" id="807900"/>
<dbReference type="KEGG" id="ppyg:807900"/>
<dbReference type="CTD" id="4508"/>
<dbReference type="GO" id="GO:0005743">
    <property type="term" value="C:mitochondrial inner membrane"/>
    <property type="evidence" value="ECO:0007669"/>
    <property type="project" value="UniProtKB-SubCell"/>
</dbReference>
<dbReference type="GO" id="GO:0045259">
    <property type="term" value="C:proton-transporting ATP synthase complex"/>
    <property type="evidence" value="ECO:0000250"/>
    <property type="project" value="UniProtKB"/>
</dbReference>
<dbReference type="GO" id="GO:0015252">
    <property type="term" value="F:proton channel activity"/>
    <property type="evidence" value="ECO:0000250"/>
    <property type="project" value="UniProtKB"/>
</dbReference>
<dbReference type="GO" id="GO:0046933">
    <property type="term" value="F:proton-transporting ATP synthase activity, rotational mechanism"/>
    <property type="evidence" value="ECO:0007669"/>
    <property type="project" value="TreeGrafter"/>
</dbReference>
<dbReference type="GO" id="GO:0015986">
    <property type="term" value="P:proton motive force-driven ATP synthesis"/>
    <property type="evidence" value="ECO:0000250"/>
    <property type="project" value="UniProtKB"/>
</dbReference>
<dbReference type="GO" id="GO:1902600">
    <property type="term" value="P:proton transmembrane transport"/>
    <property type="evidence" value="ECO:0000250"/>
    <property type="project" value="UniProtKB"/>
</dbReference>
<dbReference type="CDD" id="cd00310">
    <property type="entry name" value="ATP-synt_Fo_a_6"/>
    <property type="match status" value="1"/>
</dbReference>
<dbReference type="FunFam" id="1.20.120.220:FF:000004">
    <property type="entry name" value="ATP synthase subunit a"/>
    <property type="match status" value="1"/>
</dbReference>
<dbReference type="Gene3D" id="1.20.120.220">
    <property type="entry name" value="ATP synthase, F0 complex, subunit A"/>
    <property type="match status" value="1"/>
</dbReference>
<dbReference type="InterPro" id="IPR000568">
    <property type="entry name" value="ATP_synth_F0_asu"/>
</dbReference>
<dbReference type="InterPro" id="IPR023011">
    <property type="entry name" value="ATP_synth_F0_asu_AS"/>
</dbReference>
<dbReference type="InterPro" id="IPR045083">
    <property type="entry name" value="ATP_synth_F0_asu_bact/mt"/>
</dbReference>
<dbReference type="InterPro" id="IPR035908">
    <property type="entry name" value="F0_ATP_A_sf"/>
</dbReference>
<dbReference type="NCBIfam" id="TIGR01131">
    <property type="entry name" value="ATP_synt_6_or_A"/>
    <property type="match status" value="1"/>
</dbReference>
<dbReference type="PANTHER" id="PTHR11410">
    <property type="entry name" value="ATP SYNTHASE SUBUNIT A"/>
    <property type="match status" value="1"/>
</dbReference>
<dbReference type="PANTHER" id="PTHR11410:SF0">
    <property type="entry name" value="ATP SYNTHASE SUBUNIT A"/>
    <property type="match status" value="1"/>
</dbReference>
<dbReference type="Pfam" id="PF00119">
    <property type="entry name" value="ATP-synt_A"/>
    <property type="match status" value="1"/>
</dbReference>
<dbReference type="PRINTS" id="PR00123">
    <property type="entry name" value="ATPASEA"/>
</dbReference>
<dbReference type="SUPFAM" id="SSF81336">
    <property type="entry name" value="F1F0 ATP synthase subunit A"/>
    <property type="match status" value="1"/>
</dbReference>
<dbReference type="PROSITE" id="PS00449">
    <property type="entry name" value="ATPASE_A"/>
    <property type="match status" value="1"/>
</dbReference>
<protein>
    <recommendedName>
        <fullName evidence="1">ATP synthase F(0) complex subunit a</fullName>
    </recommendedName>
    <alternativeName>
        <fullName>F-ATPase protein 6</fullName>
    </alternativeName>
    <alternativeName>
        <fullName evidence="1">Proton-conducting channel, ATP synthase F(0) complex subunit a</fullName>
    </alternativeName>
</protein>
<comment type="function">
    <text evidence="1">Subunit a, of the mitochondrial membrane ATP synthase complex (F(1)F(0) ATP synthase or Complex V) that produces ATP from ADP in the presence of a proton gradient across the membrane which is generated by electron transport complexes of the respiratory chain. ATP synthase complex consist of a soluble F(1) head domain - the catalytic core - and a membrane F(1) domain - the membrane proton channel. These two domains are linked by a central stalk rotating inside the F(1) region and a stationary peripheral stalk. During catalysis, ATP synthesis in the catalytic domain of F(1) is coupled via a rotary mechanism of the central stalk subunits to proton translocation. With the subunit c (ATP5MC1), forms the proton-conducting channel in the F(0) domain, that contains two crucial half-channels (inlet and outlet) that facilitate proton movement from the mitochondrial intermembrane space (IMS) into the matrix. Protons are taken up via the inlet half-channel and released through the outlet half-channel, following a Grotthuss mechanism.</text>
</comment>
<comment type="catalytic activity">
    <reaction evidence="1">
        <text>H(+)(in) = H(+)(out)</text>
        <dbReference type="Rhea" id="RHEA:34979"/>
        <dbReference type="ChEBI" id="CHEBI:15378"/>
    </reaction>
</comment>
<comment type="subunit">
    <text evidence="1">Component of the ATP synthase complex composed at least of ATP5F1A/subunit alpha, ATP5F1B/subunit beta, ATP5MC1/subunit c (homooctomer), MT-ATP6/subunit a, MT-ATP8/subunit 8, ATP5ME/subunit e, ATP5MF/subunit f, ATP5MG/subunit g, ATP5MK/subunit k, ATP5MJ/subunit j, ATP5F1C/subunit gamma, ATP5F1D/subunit delta, ATP5F1E/subunit epsilon, ATP5PF/subunit F6, ATP5PB/subunit b, ATP5PD/subunit d, ATP5PO/subunit OSCP. ATP synthase complex consists of a soluble F(1) head domain (subunits alpha(3) and beta(3)) - the catalytic core - and a membrane F(0) domain - the membrane proton channel (subunits c, a, 8, e, f, g, k and j). These two domains are linked by a central stalk (subunits gamma, delta, and epsilon) rotating inside the F1 region and a stationary peripheral stalk (subunits F6, b, d, and OSCP). Interacts with DNAJC30; interaction is direct.</text>
</comment>
<comment type="subcellular location">
    <subcellularLocation>
        <location>Mitochondrion inner membrane</location>
        <topology>Multi-pass membrane protein</topology>
    </subcellularLocation>
</comment>
<comment type="similarity">
    <text evidence="4">Belongs to the ATPase A chain family.</text>
</comment>
<feature type="chain" id="PRO_0000082160" description="ATP synthase F(0) complex subunit a">
    <location>
        <begin position="1"/>
        <end position="226"/>
    </location>
</feature>
<feature type="transmembrane region" description="Helical" evidence="2">
    <location>
        <begin position="12"/>
        <end position="32"/>
    </location>
</feature>
<feature type="transmembrane region" description="Helical" evidence="2">
    <location>
        <begin position="68"/>
        <end position="88"/>
    </location>
</feature>
<feature type="transmembrane region" description="Helical" evidence="2">
    <location>
        <begin position="97"/>
        <end position="117"/>
    </location>
</feature>
<feature type="transmembrane region" description="Helical" evidence="2">
    <location>
        <begin position="138"/>
        <end position="158"/>
    </location>
</feature>
<feature type="transmembrane region" description="Helical" evidence="2">
    <location>
        <begin position="164"/>
        <end position="184"/>
    </location>
</feature>
<feature type="transmembrane region" description="Helical" evidence="2">
    <location>
        <begin position="189"/>
        <end position="209"/>
    </location>
</feature>
<feature type="sequence variant" id="VAR_019552" description="In strain: Isolate Anna." evidence="3">
    <original>D</original>
    <variation>N</variation>
    <location>
        <position position="4"/>
    </location>
</feature>
<feature type="sequence variant" id="VAR_019553" description="In strain: Isolate Anna." evidence="3">
    <original>T</original>
    <variation>A</variation>
    <location>
        <position position="178"/>
    </location>
</feature>
<proteinExistence type="inferred from homology"/>
<evidence type="ECO:0000250" key="1">
    <source>
        <dbReference type="UniProtKB" id="P00846"/>
    </source>
</evidence>
<evidence type="ECO:0000255" key="2"/>
<evidence type="ECO:0000269" key="3">
    <source>
    </source>
</evidence>
<evidence type="ECO:0000305" key="4"/>
<name>ATP6_PONPY</name>
<gene>
    <name evidence="1" type="primary">MT-ATP6</name>
    <name type="synonym">ATP6</name>
    <name type="synonym">ATPASE6</name>
    <name type="synonym">MTATP6</name>
</gene>
<geneLocation type="mitochondrion"/>
<sequence length="226" mass="24933">MNEDLFTPFTTPTVLGLPAAILVILFPPLLVPTSKHFINNRLITTQQWLIRLTLKQMMITHNTKGRTWSLMLTSLIIFIASTNLLGLFPYSFTPTTQLSMNLAMAIPLWASTVAMGLRFKAKISLAHLLPQGTPTPLIPMLIIIETISLFIQPLALAVRLTANITAGHLLMHLIGSATLTMLTINLPLTLITLTILTLLTILEIAVALIQAYVFTLLVSLYLHDNS</sequence>